<evidence type="ECO:0000255" key="1">
    <source>
        <dbReference type="HAMAP-Rule" id="MF_00251"/>
    </source>
</evidence>
<evidence type="ECO:0000305" key="2"/>
<protein>
    <recommendedName>
        <fullName evidence="1">Large ribosomal subunit protein bL36</fullName>
    </recommendedName>
    <alternativeName>
        <fullName evidence="2">50S ribosomal protein L36</fullName>
    </alternativeName>
</protein>
<comment type="similarity">
    <text evidence="1">Belongs to the bacterial ribosomal protein bL36 family.</text>
</comment>
<accession>Q8EK49</accession>
<sequence length="37" mass="4263">MKVRASVKKICRNCKIVKRSGVVRVICVEPKHKQRQG</sequence>
<dbReference type="EMBL" id="AE014299">
    <property type="protein sequence ID" value="AAN53337.1"/>
    <property type="molecule type" value="Genomic_DNA"/>
</dbReference>
<dbReference type="RefSeq" id="NP_715892.1">
    <property type="nucleotide sequence ID" value="NC_004347.2"/>
</dbReference>
<dbReference type="RefSeq" id="WP_006083579.1">
    <property type="nucleotide sequence ID" value="NZ_CP053946.1"/>
</dbReference>
<dbReference type="SMR" id="Q8EK49"/>
<dbReference type="STRING" id="211586.SO_0252"/>
<dbReference type="PaxDb" id="211586-SO_0252"/>
<dbReference type="GeneID" id="94726207"/>
<dbReference type="KEGG" id="son:SO_0252"/>
<dbReference type="PATRIC" id="fig|211586.12.peg.240"/>
<dbReference type="eggNOG" id="COG0257">
    <property type="taxonomic scope" value="Bacteria"/>
</dbReference>
<dbReference type="HOGENOM" id="CLU_135723_6_2_6"/>
<dbReference type="OrthoDB" id="9802520at2"/>
<dbReference type="PhylomeDB" id="Q8EK49"/>
<dbReference type="BioCyc" id="SONE211586:G1GMP-241-MONOMER"/>
<dbReference type="Proteomes" id="UP000008186">
    <property type="component" value="Chromosome"/>
</dbReference>
<dbReference type="GO" id="GO:0005737">
    <property type="term" value="C:cytoplasm"/>
    <property type="evidence" value="ECO:0007669"/>
    <property type="project" value="UniProtKB-ARBA"/>
</dbReference>
<dbReference type="GO" id="GO:1990904">
    <property type="term" value="C:ribonucleoprotein complex"/>
    <property type="evidence" value="ECO:0007669"/>
    <property type="project" value="UniProtKB-KW"/>
</dbReference>
<dbReference type="GO" id="GO:0005840">
    <property type="term" value="C:ribosome"/>
    <property type="evidence" value="ECO:0007669"/>
    <property type="project" value="UniProtKB-KW"/>
</dbReference>
<dbReference type="GO" id="GO:0003735">
    <property type="term" value="F:structural constituent of ribosome"/>
    <property type="evidence" value="ECO:0007669"/>
    <property type="project" value="InterPro"/>
</dbReference>
<dbReference type="GO" id="GO:0006412">
    <property type="term" value="P:translation"/>
    <property type="evidence" value="ECO:0007669"/>
    <property type="project" value="UniProtKB-UniRule"/>
</dbReference>
<dbReference type="HAMAP" id="MF_00251">
    <property type="entry name" value="Ribosomal_bL36"/>
    <property type="match status" value="1"/>
</dbReference>
<dbReference type="InterPro" id="IPR000473">
    <property type="entry name" value="Ribosomal_bL36"/>
</dbReference>
<dbReference type="InterPro" id="IPR035977">
    <property type="entry name" value="Ribosomal_bL36_sp"/>
</dbReference>
<dbReference type="NCBIfam" id="TIGR01022">
    <property type="entry name" value="rpmJ_bact"/>
    <property type="match status" value="1"/>
</dbReference>
<dbReference type="PANTHER" id="PTHR42888">
    <property type="entry name" value="50S RIBOSOMAL PROTEIN L36, CHLOROPLASTIC"/>
    <property type="match status" value="1"/>
</dbReference>
<dbReference type="PANTHER" id="PTHR42888:SF1">
    <property type="entry name" value="LARGE RIBOSOMAL SUBUNIT PROTEIN BL36C"/>
    <property type="match status" value="1"/>
</dbReference>
<dbReference type="Pfam" id="PF00444">
    <property type="entry name" value="Ribosomal_L36"/>
    <property type="match status" value="1"/>
</dbReference>
<dbReference type="SUPFAM" id="SSF57840">
    <property type="entry name" value="Ribosomal protein L36"/>
    <property type="match status" value="1"/>
</dbReference>
<dbReference type="PROSITE" id="PS00828">
    <property type="entry name" value="RIBOSOMAL_L36"/>
    <property type="match status" value="1"/>
</dbReference>
<reference key="1">
    <citation type="journal article" date="2002" name="Nat. Biotechnol.">
        <title>Genome sequence of the dissimilatory metal ion-reducing bacterium Shewanella oneidensis.</title>
        <authorList>
            <person name="Heidelberg J.F."/>
            <person name="Paulsen I.T."/>
            <person name="Nelson K.E."/>
            <person name="Gaidos E.J."/>
            <person name="Nelson W.C."/>
            <person name="Read T.D."/>
            <person name="Eisen J.A."/>
            <person name="Seshadri R."/>
            <person name="Ward N.L."/>
            <person name="Methe B.A."/>
            <person name="Clayton R.A."/>
            <person name="Meyer T."/>
            <person name="Tsapin A."/>
            <person name="Scott J."/>
            <person name="Beanan M.J."/>
            <person name="Brinkac L.M."/>
            <person name="Daugherty S.C."/>
            <person name="DeBoy R.T."/>
            <person name="Dodson R.J."/>
            <person name="Durkin A.S."/>
            <person name="Haft D.H."/>
            <person name="Kolonay J.F."/>
            <person name="Madupu R."/>
            <person name="Peterson J.D."/>
            <person name="Umayam L.A."/>
            <person name="White O."/>
            <person name="Wolf A.M."/>
            <person name="Vamathevan J.J."/>
            <person name="Weidman J.F."/>
            <person name="Impraim M."/>
            <person name="Lee K."/>
            <person name="Berry K.J."/>
            <person name="Lee C."/>
            <person name="Mueller J."/>
            <person name="Khouri H.M."/>
            <person name="Gill J."/>
            <person name="Utterback T.R."/>
            <person name="McDonald L.A."/>
            <person name="Feldblyum T.V."/>
            <person name="Smith H.O."/>
            <person name="Venter J.C."/>
            <person name="Nealson K.H."/>
            <person name="Fraser C.M."/>
        </authorList>
    </citation>
    <scope>NUCLEOTIDE SEQUENCE [LARGE SCALE GENOMIC DNA]</scope>
    <source>
        <strain>ATCC 700550 / JCM 31522 / CIP 106686 / LMG 19005 / NCIMB 14063 / MR-1</strain>
    </source>
</reference>
<feature type="chain" id="PRO_0000126255" description="Large ribosomal subunit protein bL36">
    <location>
        <begin position="1"/>
        <end position="37"/>
    </location>
</feature>
<gene>
    <name evidence="1" type="primary">rpmJ</name>
    <name type="ordered locus">SO_0252</name>
</gene>
<proteinExistence type="inferred from homology"/>
<keyword id="KW-1185">Reference proteome</keyword>
<keyword id="KW-0687">Ribonucleoprotein</keyword>
<keyword id="KW-0689">Ribosomal protein</keyword>
<name>RL36_SHEON</name>
<organism>
    <name type="scientific">Shewanella oneidensis (strain ATCC 700550 / JCM 31522 / CIP 106686 / LMG 19005 / NCIMB 14063 / MR-1)</name>
    <dbReference type="NCBI Taxonomy" id="211586"/>
    <lineage>
        <taxon>Bacteria</taxon>
        <taxon>Pseudomonadati</taxon>
        <taxon>Pseudomonadota</taxon>
        <taxon>Gammaproteobacteria</taxon>
        <taxon>Alteromonadales</taxon>
        <taxon>Shewanellaceae</taxon>
        <taxon>Shewanella</taxon>
    </lineage>
</organism>